<feature type="chain" id="PRO_0000191189" description="Chaperone protein ClpB 2">
    <location>
        <begin position="1"/>
        <end position="895"/>
    </location>
</feature>
<feature type="domain" description="Clp R" evidence="2">
    <location>
        <begin position="6"/>
        <end position="148"/>
    </location>
</feature>
<feature type="region of interest" description="Repeat 1" evidence="2">
    <location>
        <begin position="9"/>
        <end position="74"/>
    </location>
</feature>
<feature type="region of interest" description="Repeat 2" evidence="2">
    <location>
        <begin position="85"/>
        <end position="148"/>
    </location>
</feature>
<feature type="region of interest" description="NBD1" evidence="1">
    <location>
        <begin position="163"/>
        <end position="346"/>
    </location>
</feature>
<feature type="region of interest" description="Linker" evidence="1">
    <location>
        <begin position="347"/>
        <end position="557"/>
    </location>
</feature>
<feature type="region of interest" description="NBD2" evidence="1">
    <location>
        <begin position="567"/>
        <end position="778"/>
    </location>
</feature>
<feature type="region of interest" description="C-terminal" evidence="1">
    <location>
        <begin position="779"/>
        <end position="895"/>
    </location>
</feature>
<feature type="coiled-coil region" evidence="1">
    <location>
        <begin position="397"/>
        <end position="533"/>
    </location>
</feature>
<feature type="binding site" evidence="1">
    <location>
        <begin position="210"/>
        <end position="217"/>
    </location>
    <ligand>
        <name>ATP</name>
        <dbReference type="ChEBI" id="CHEBI:30616"/>
        <label>1</label>
    </ligand>
</feature>
<feature type="binding site" evidence="1">
    <location>
        <begin position="617"/>
        <end position="624"/>
    </location>
    <ligand>
        <name>ATP</name>
        <dbReference type="ChEBI" id="CHEBI:30616"/>
        <label>2</label>
    </ligand>
</feature>
<organism>
    <name type="scientific">Synechococcus elongatus (strain ATCC 33912 / PCC 7942 / FACHB-805)</name>
    <name type="common">Anacystis nidulans R2</name>
    <dbReference type="NCBI Taxonomy" id="1140"/>
    <lineage>
        <taxon>Bacteria</taxon>
        <taxon>Bacillati</taxon>
        <taxon>Cyanobacteriota</taxon>
        <taxon>Cyanophyceae</taxon>
        <taxon>Synechococcales</taxon>
        <taxon>Synechococcaceae</taxon>
        <taxon>Synechococcus</taxon>
    </lineage>
</organism>
<proteinExistence type="inferred from homology"/>
<keyword id="KW-0067">ATP-binding</keyword>
<keyword id="KW-0143">Chaperone</keyword>
<keyword id="KW-0175">Coiled coil</keyword>
<keyword id="KW-0963">Cytoplasm</keyword>
<keyword id="KW-0547">Nucleotide-binding</keyword>
<keyword id="KW-1185">Reference proteome</keyword>
<keyword id="KW-0677">Repeat</keyword>
<keyword id="KW-0346">Stress response</keyword>
<evidence type="ECO:0000250" key="1"/>
<evidence type="ECO:0000255" key="2">
    <source>
        <dbReference type="PROSITE-ProRule" id="PRU01251"/>
    </source>
</evidence>
<evidence type="ECO:0000305" key="3"/>
<reference key="1">
    <citation type="journal article" date="2001" name="J. Bacteriol.">
        <title>Novel form of ClpB/HSP100 protein in the cyanobacterium Synechococcus.</title>
        <authorList>
            <person name="Eriksson M.J."/>
            <person name="Schelin J."/>
            <person name="Miskiewicz E."/>
            <person name="Clarke A.K."/>
        </authorList>
    </citation>
    <scope>NUCLEOTIDE SEQUENCE [GENOMIC DNA]</scope>
</reference>
<reference key="2">
    <citation type="submission" date="2005-08" db="EMBL/GenBank/DDBJ databases">
        <title>Complete sequence of chromosome 1 of Synechococcus elongatus PCC 7942.</title>
        <authorList>
            <consortium name="US DOE Joint Genome Institute"/>
            <person name="Copeland A."/>
            <person name="Lucas S."/>
            <person name="Lapidus A."/>
            <person name="Barry K."/>
            <person name="Detter J.C."/>
            <person name="Glavina T."/>
            <person name="Hammon N."/>
            <person name="Israni S."/>
            <person name="Pitluck S."/>
            <person name="Schmutz J."/>
            <person name="Larimer F."/>
            <person name="Land M."/>
            <person name="Kyrpides N."/>
            <person name="Lykidis A."/>
            <person name="Golden S."/>
            <person name="Richardson P."/>
        </authorList>
    </citation>
    <scope>NUCLEOTIDE SEQUENCE [LARGE SCALE GENOMIC DNA]</scope>
    <source>
        <strain>ATCC 33912 / PCC 7942 / FACHB-805</strain>
    </source>
</reference>
<comment type="function">
    <text evidence="1">Part of a stress-induced multi-chaperone system, it is involved in the recovery of the cell from heat-induced damage, in cooperation with DnaK, DnaJ and GrpE. Acts before DnaK, in the processing of protein aggregates. Protein binding stimulates the ATPase activity; ATP hydrolysis unfolds the denatured protein aggregates, which probably helps expose new hydrophobic binding sites on the surface of ClpB-bound aggregates, contributing to the solubilization and refolding of denatured protein aggregates by DnaK (By similarity).</text>
</comment>
<comment type="subunit">
    <text evidence="1">Homohexamer. The oligomerization is ATP-dependent (By similarity).</text>
</comment>
<comment type="subcellular location">
    <subcellularLocation>
        <location evidence="3">Cytoplasm</location>
    </subcellularLocation>
</comment>
<comment type="domain">
    <text evidence="1">The Clp repeat (R) domain probably functions as a substrate-discriminating domain, recruiting aggregated proteins to the ClpB hexamer and/or stabilizing bound proteins. The NBD2 domain is responsible for oligomerization, whereas the NBD1 domain stabilizes the hexamer probably in an ATP-dependent manner. The movement of the coiled-coil domain is essential for ClpB ability to rescue proteins from an aggregated state, probably by pulling apart large aggregated proteins, which are bound between the coiled-coils motifs of adjacent ClpB subunits in the functional hexamer (By similarity).</text>
</comment>
<comment type="miscellaneous">
    <text>Not induced by heat shock or other stresses, it is expressed constitutively in the cell.</text>
</comment>
<comment type="similarity">
    <text evidence="3">Belongs to the ClpA/ClpB family.</text>
</comment>
<gene>
    <name type="primary">clpB2</name>
    <name type="ordered locus">Synpcc7942_0637</name>
</gene>
<dbReference type="EMBL" id="U97124">
    <property type="protein sequence ID" value="AAB72154.1"/>
    <property type="molecule type" value="Genomic_DNA"/>
</dbReference>
<dbReference type="EMBL" id="CP000100">
    <property type="protein sequence ID" value="ABB56669.1"/>
    <property type="molecule type" value="Genomic_DNA"/>
</dbReference>
<dbReference type="SMR" id="O34209"/>
<dbReference type="STRING" id="1140.Synpcc7942_0637"/>
<dbReference type="PaxDb" id="1140-Synpcc7942_0637"/>
<dbReference type="KEGG" id="syf:Synpcc7942_0637"/>
<dbReference type="eggNOG" id="COG0542">
    <property type="taxonomic scope" value="Bacteria"/>
</dbReference>
<dbReference type="HOGENOM" id="CLU_005070_4_0_3"/>
<dbReference type="OrthoDB" id="9803641at2"/>
<dbReference type="BioCyc" id="SYNEL:SYNPCC7942_0637-MONOMER"/>
<dbReference type="Proteomes" id="UP000889800">
    <property type="component" value="Chromosome"/>
</dbReference>
<dbReference type="GO" id="GO:0005737">
    <property type="term" value="C:cytoplasm"/>
    <property type="evidence" value="ECO:0007669"/>
    <property type="project" value="UniProtKB-SubCell"/>
</dbReference>
<dbReference type="GO" id="GO:0005524">
    <property type="term" value="F:ATP binding"/>
    <property type="evidence" value="ECO:0007669"/>
    <property type="project" value="UniProtKB-KW"/>
</dbReference>
<dbReference type="GO" id="GO:0016887">
    <property type="term" value="F:ATP hydrolysis activity"/>
    <property type="evidence" value="ECO:0007669"/>
    <property type="project" value="InterPro"/>
</dbReference>
<dbReference type="GO" id="GO:0034605">
    <property type="term" value="P:cellular response to heat"/>
    <property type="evidence" value="ECO:0007669"/>
    <property type="project" value="TreeGrafter"/>
</dbReference>
<dbReference type="GO" id="GO:0042026">
    <property type="term" value="P:protein refolding"/>
    <property type="evidence" value="ECO:0007669"/>
    <property type="project" value="InterPro"/>
</dbReference>
<dbReference type="CDD" id="cd00009">
    <property type="entry name" value="AAA"/>
    <property type="match status" value="1"/>
</dbReference>
<dbReference type="CDD" id="cd19499">
    <property type="entry name" value="RecA-like_ClpB_Hsp104-like"/>
    <property type="match status" value="1"/>
</dbReference>
<dbReference type="FunFam" id="1.10.8.60:FF:000017">
    <property type="entry name" value="ATP-dependent chaperone ClpB"/>
    <property type="match status" value="1"/>
</dbReference>
<dbReference type="FunFam" id="3.40.50.300:FF:000120">
    <property type="entry name" value="ATP-dependent chaperone ClpB"/>
    <property type="match status" value="1"/>
</dbReference>
<dbReference type="FunFam" id="3.40.50.300:FF:000025">
    <property type="entry name" value="ATP-dependent Clp protease subunit"/>
    <property type="match status" value="1"/>
</dbReference>
<dbReference type="FunFam" id="3.40.50.300:FF:000010">
    <property type="entry name" value="Chaperone clpB 1, putative"/>
    <property type="match status" value="1"/>
</dbReference>
<dbReference type="Gene3D" id="1.10.8.60">
    <property type="match status" value="1"/>
</dbReference>
<dbReference type="Gene3D" id="1.10.1780.10">
    <property type="entry name" value="Clp, N-terminal domain"/>
    <property type="match status" value="1"/>
</dbReference>
<dbReference type="Gene3D" id="3.40.50.300">
    <property type="entry name" value="P-loop containing nucleotide triphosphate hydrolases"/>
    <property type="match status" value="3"/>
</dbReference>
<dbReference type="InterPro" id="IPR003593">
    <property type="entry name" value="AAA+_ATPase"/>
</dbReference>
<dbReference type="InterPro" id="IPR003959">
    <property type="entry name" value="ATPase_AAA_core"/>
</dbReference>
<dbReference type="InterPro" id="IPR017730">
    <property type="entry name" value="Chaperonin_ClpB"/>
</dbReference>
<dbReference type="InterPro" id="IPR019489">
    <property type="entry name" value="Clp_ATPase_C"/>
</dbReference>
<dbReference type="InterPro" id="IPR036628">
    <property type="entry name" value="Clp_N_dom_sf"/>
</dbReference>
<dbReference type="InterPro" id="IPR004176">
    <property type="entry name" value="Clp_R_dom"/>
</dbReference>
<dbReference type="InterPro" id="IPR001270">
    <property type="entry name" value="ClpA/B"/>
</dbReference>
<dbReference type="InterPro" id="IPR018368">
    <property type="entry name" value="ClpA/B_CS1"/>
</dbReference>
<dbReference type="InterPro" id="IPR028299">
    <property type="entry name" value="ClpA/B_CS2"/>
</dbReference>
<dbReference type="InterPro" id="IPR041546">
    <property type="entry name" value="ClpA/ClpB_AAA_lid"/>
</dbReference>
<dbReference type="InterPro" id="IPR050130">
    <property type="entry name" value="ClpA_ClpB"/>
</dbReference>
<dbReference type="InterPro" id="IPR027417">
    <property type="entry name" value="P-loop_NTPase"/>
</dbReference>
<dbReference type="NCBIfam" id="TIGR03346">
    <property type="entry name" value="chaperone_ClpB"/>
    <property type="match status" value="1"/>
</dbReference>
<dbReference type="PANTHER" id="PTHR11638">
    <property type="entry name" value="ATP-DEPENDENT CLP PROTEASE"/>
    <property type="match status" value="1"/>
</dbReference>
<dbReference type="PANTHER" id="PTHR11638:SF18">
    <property type="entry name" value="HEAT SHOCK PROTEIN 104"/>
    <property type="match status" value="1"/>
</dbReference>
<dbReference type="Pfam" id="PF00004">
    <property type="entry name" value="AAA"/>
    <property type="match status" value="1"/>
</dbReference>
<dbReference type="Pfam" id="PF07724">
    <property type="entry name" value="AAA_2"/>
    <property type="match status" value="1"/>
</dbReference>
<dbReference type="Pfam" id="PF17871">
    <property type="entry name" value="AAA_lid_9"/>
    <property type="match status" value="1"/>
</dbReference>
<dbReference type="Pfam" id="PF02861">
    <property type="entry name" value="Clp_N"/>
    <property type="match status" value="2"/>
</dbReference>
<dbReference type="Pfam" id="PF10431">
    <property type="entry name" value="ClpB_D2-small"/>
    <property type="match status" value="1"/>
</dbReference>
<dbReference type="PRINTS" id="PR00300">
    <property type="entry name" value="CLPPROTEASEA"/>
</dbReference>
<dbReference type="SMART" id="SM00382">
    <property type="entry name" value="AAA"/>
    <property type="match status" value="2"/>
</dbReference>
<dbReference type="SMART" id="SM01086">
    <property type="entry name" value="ClpB_D2-small"/>
    <property type="match status" value="1"/>
</dbReference>
<dbReference type="SUPFAM" id="SSF81923">
    <property type="entry name" value="Double Clp-N motif"/>
    <property type="match status" value="1"/>
</dbReference>
<dbReference type="SUPFAM" id="SSF52540">
    <property type="entry name" value="P-loop containing nucleoside triphosphate hydrolases"/>
    <property type="match status" value="2"/>
</dbReference>
<dbReference type="PROSITE" id="PS51903">
    <property type="entry name" value="CLP_R"/>
    <property type="match status" value="1"/>
</dbReference>
<dbReference type="PROSITE" id="PS00870">
    <property type="entry name" value="CLPAB_1"/>
    <property type="match status" value="1"/>
</dbReference>
<dbReference type="PROSITE" id="PS00871">
    <property type="entry name" value="CLPAB_2"/>
    <property type="match status" value="1"/>
</dbReference>
<accession>O34209</accession>
<accession>Q31QK0</accession>
<protein>
    <recommendedName>
        <fullName>Chaperone protein ClpB 2</fullName>
    </recommendedName>
</protein>
<name>CLPB2_SYNE7</name>
<sequence length="895" mass="99821">MQPTDPNRFTDQAWDAIVESQTVARQLRQQQLEVEHVLLALLDQESGVAAEILAKAGVAVANLRQPLEDFARRQPRNASGTQLYLGRGLDRLLDLAERARELWQDEFIGVEHLLMGFVEDDRIGRRLAQGLKLDAKTLETTIQALRSPAADEAEAEESEPSYPFLSKYGRDLTALAEQEKLDPVIGRDLEIRRVIQVLSRRSKNNPVLIGEPGVGKTAIAEGLAQRIVAGEVPDSLKQRRLISLDMGSLIAGAKYRGEFEERLRAVLHEVTHSDGQMVLFIDELHTVVGAGAGQQGSAMDAGNLLKPMLARGELRCIGATTTDEYRRTIEKDPALERRFQQVYVSQPSVEDTIAILRGLKERYEGHHGVKITDGALMAAAKLSHRYISDRFLPDKAIDLIDEASAQLKMEITSKPSELEDLERRLLQLEMEQLSLSGENGQASVHSDRLQQIQTELQTLQEQQARLNQQWQQEKQLLEELGRLQEEEETLRQQVNQAEREHDLNKGAELKFGQLEALQQQRQAIEEQIQALHANGQTLLREQVEEADIAEIVARWTNIPVQRLLESERQKLLQLESFLHQRVIGQDEAVVAVAAAIRRARAGMKDPSRPIGSFLFLGPTGVGKTELARALANCLFDAEDALIRFDMSEYMEKNSISRLIGAPPGYIGYEEGGQLSEAIRRHPYAVVLFDEVEKAHPDVFNLLLQVLDDGRITDSQGRTIDFCNAVIVMTSNIGSQFILEMGEEEASLDAVELKVLGALRQHFRPEFLNRIDDTILFQPLSRGQLQQIVDIQLQRLKRLLAEQAIALNVTPAAAANLADRGYDPVYGARPLKRAIQRLIENPVASLILEQQFDAGDALIVDVDAEGQLQFQVSKPVTATVVEPDDSPAIAVEAIPS</sequence>